<name>Y1158_METJA</name>
<protein>
    <recommendedName>
        <fullName>Uncharacterized protein MJ1158</fullName>
    </recommendedName>
</protein>
<keyword id="KW-1185">Reference proteome</keyword>
<gene>
    <name type="ordered locus">MJ1158</name>
</gene>
<feature type="chain" id="PRO_0000107196" description="Uncharacterized protein MJ1158">
    <location>
        <begin position="1"/>
        <end position="129"/>
    </location>
</feature>
<accession>Q58557</accession>
<reference key="1">
    <citation type="journal article" date="1996" name="Science">
        <title>Complete genome sequence of the methanogenic archaeon, Methanococcus jannaschii.</title>
        <authorList>
            <person name="Bult C.J."/>
            <person name="White O."/>
            <person name="Olsen G.J."/>
            <person name="Zhou L."/>
            <person name="Fleischmann R.D."/>
            <person name="Sutton G.G."/>
            <person name="Blake J.A."/>
            <person name="FitzGerald L.M."/>
            <person name="Clayton R.A."/>
            <person name="Gocayne J.D."/>
            <person name="Kerlavage A.R."/>
            <person name="Dougherty B.A."/>
            <person name="Tomb J.-F."/>
            <person name="Adams M.D."/>
            <person name="Reich C.I."/>
            <person name="Overbeek R."/>
            <person name="Kirkness E.F."/>
            <person name="Weinstock K.G."/>
            <person name="Merrick J.M."/>
            <person name="Glodek A."/>
            <person name="Scott J.L."/>
            <person name="Geoghagen N.S.M."/>
            <person name="Weidman J.F."/>
            <person name="Fuhrmann J.L."/>
            <person name="Nguyen D."/>
            <person name="Utterback T.R."/>
            <person name="Kelley J.M."/>
            <person name="Peterson J.D."/>
            <person name="Sadow P.W."/>
            <person name="Hanna M.C."/>
            <person name="Cotton M.D."/>
            <person name="Roberts K.M."/>
            <person name="Hurst M.A."/>
            <person name="Kaine B.P."/>
            <person name="Borodovsky M."/>
            <person name="Klenk H.-P."/>
            <person name="Fraser C.M."/>
            <person name="Smith H.O."/>
            <person name="Woese C.R."/>
            <person name="Venter J.C."/>
        </authorList>
    </citation>
    <scope>NUCLEOTIDE SEQUENCE [LARGE SCALE GENOMIC DNA]</scope>
    <source>
        <strain>ATCC 43067 / DSM 2661 / JAL-1 / JCM 10045 / NBRC 100440</strain>
    </source>
</reference>
<organism>
    <name type="scientific">Methanocaldococcus jannaschii (strain ATCC 43067 / DSM 2661 / JAL-1 / JCM 10045 / NBRC 100440)</name>
    <name type="common">Methanococcus jannaschii</name>
    <dbReference type="NCBI Taxonomy" id="243232"/>
    <lineage>
        <taxon>Archaea</taxon>
        <taxon>Methanobacteriati</taxon>
        <taxon>Methanobacteriota</taxon>
        <taxon>Methanomada group</taxon>
        <taxon>Methanococci</taxon>
        <taxon>Methanococcales</taxon>
        <taxon>Methanocaldococcaceae</taxon>
        <taxon>Methanocaldococcus</taxon>
    </lineage>
</organism>
<proteinExistence type="predicted"/>
<sequence>MWGIQHFGDFMEKWELKKLAVCFNCKKEADQIIEIYTNQAFVKCSNCGATRYYILRRVGIEDESIIEDEKNKKHKYEPWFLEKTAVCFNCKKEATQDIAITETKMIVRCRNCGFTRVYQFHILDIPENK</sequence>
<dbReference type="EMBL" id="L77117">
    <property type="protein sequence ID" value="AAB99174.1"/>
    <property type="molecule type" value="Genomic_DNA"/>
</dbReference>
<dbReference type="PIR" id="D64444">
    <property type="entry name" value="D64444"/>
</dbReference>
<dbReference type="STRING" id="243232.MJ_1158"/>
<dbReference type="PaxDb" id="243232-MJ_1158"/>
<dbReference type="EnsemblBacteria" id="AAB99174">
    <property type="protein sequence ID" value="AAB99174"/>
    <property type="gene ID" value="MJ_1158"/>
</dbReference>
<dbReference type="KEGG" id="mja:MJ_1158"/>
<dbReference type="eggNOG" id="arCOG05070">
    <property type="taxonomic scope" value="Archaea"/>
</dbReference>
<dbReference type="HOGENOM" id="CLU_157007_0_0_2"/>
<dbReference type="InParanoid" id="Q58557"/>
<dbReference type="Proteomes" id="UP000000805">
    <property type="component" value="Chromosome"/>
</dbReference>